<sequence>MIKPKIALTIAGTDPTGGAGVMADLKSFHSCGVYGMGVVTSIVAQNTLGVQHIHNLNHQWVDEQLDSVFNDTLPHAIKTGMIATADTMETIRHYLMQHESIPYVIDPVMLAKSGDSLMDNDTKQNLQHTLLPLADVVTPNLPEAEEITGLTIDSEEKIMQAGRIFINEIGSKGIIIKGGHSNDTDIAKDYLFTNEGVQTFENERFKTKHTHGTGCTFSAVITAELAKGRPLFEAVHKAKKFISMSIQYTPEIGRGRGPVNHFAYLKKEGLDDELSK</sequence>
<evidence type="ECO:0000250" key="1"/>
<evidence type="ECO:0000250" key="2">
    <source>
        <dbReference type="UniProtKB" id="P76422"/>
    </source>
</evidence>
<evidence type="ECO:0000305" key="3"/>
<protein>
    <recommendedName>
        <fullName>Hydroxymethylpyrimidine/phosphomethylpyrimidine kinase</fullName>
        <ecNumber evidence="2">2.7.1.49</ecNumber>
        <ecNumber evidence="2">2.7.4.7</ecNumber>
    </recommendedName>
    <alternativeName>
        <fullName>Hydroxymethylpyrimidine kinase</fullName>
        <shortName>HMP kinase</shortName>
    </alternativeName>
    <alternativeName>
        <fullName>Hydroxymethylpyrimidine phosphate kinase</fullName>
        <shortName>HMP-P kinase</shortName>
        <shortName>HMP-phosphate kinase</shortName>
        <shortName>HMPP kinase</shortName>
    </alternativeName>
</protein>
<dbReference type="EC" id="2.7.1.49" evidence="2"/>
<dbReference type="EC" id="2.7.4.7" evidence="2"/>
<dbReference type="EMBL" id="BA000018">
    <property type="protein sequence ID" value="BAB43180.1"/>
    <property type="molecule type" value="Genomic_DNA"/>
</dbReference>
<dbReference type="PIR" id="C90002">
    <property type="entry name" value="C90002"/>
</dbReference>
<dbReference type="RefSeq" id="WP_000594954.1">
    <property type="nucleotide sequence ID" value="NC_002745.2"/>
</dbReference>
<dbReference type="SMR" id="P99124"/>
<dbReference type="EnsemblBacteria" id="BAB43180">
    <property type="protein sequence ID" value="BAB43180"/>
    <property type="gene ID" value="BAB43180"/>
</dbReference>
<dbReference type="KEGG" id="sau:SA1896"/>
<dbReference type="HOGENOM" id="CLU_020520_0_0_9"/>
<dbReference type="UniPathway" id="UPA00060">
    <property type="reaction ID" value="UER00137"/>
</dbReference>
<dbReference type="UniPathway" id="UPA00060">
    <property type="reaction ID" value="UER00138"/>
</dbReference>
<dbReference type="GO" id="GO:0005829">
    <property type="term" value="C:cytosol"/>
    <property type="evidence" value="ECO:0007669"/>
    <property type="project" value="TreeGrafter"/>
</dbReference>
<dbReference type="GO" id="GO:0005524">
    <property type="term" value="F:ATP binding"/>
    <property type="evidence" value="ECO:0007669"/>
    <property type="project" value="UniProtKB-KW"/>
</dbReference>
<dbReference type="GO" id="GO:0008902">
    <property type="term" value="F:hydroxymethylpyrimidine kinase activity"/>
    <property type="evidence" value="ECO:0007669"/>
    <property type="project" value="UniProtKB-EC"/>
</dbReference>
<dbReference type="GO" id="GO:0008972">
    <property type="term" value="F:phosphomethylpyrimidine kinase activity"/>
    <property type="evidence" value="ECO:0007669"/>
    <property type="project" value="UniProtKB-EC"/>
</dbReference>
<dbReference type="GO" id="GO:0009228">
    <property type="term" value="P:thiamine biosynthetic process"/>
    <property type="evidence" value="ECO:0007669"/>
    <property type="project" value="UniProtKB-KW"/>
</dbReference>
<dbReference type="GO" id="GO:0009229">
    <property type="term" value="P:thiamine diphosphate biosynthetic process"/>
    <property type="evidence" value="ECO:0007669"/>
    <property type="project" value="UniProtKB-UniPathway"/>
</dbReference>
<dbReference type="CDD" id="cd01169">
    <property type="entry name" value="HMPP_kinase"/>
    <property type="match status" value="1"/>
</dbReference>
<dbReference type="FunFam" id="3.40.1190.20:FF:000003">
    <property type="entry name" value="Phosphomethylpyrimidine kinase ThiD"/>
    <property type="match status" value="1"/>
</dbReference>
<dbReference type="Gene3D" id="3.40.1190.20">
    <property type="match status" value="1"/>
</dbReference>
<dbReference type="InterPro" id="IPR004399">
    <property type="entry name" value="HMP/HMP-P_kinase_dom"/>
</dbReference>
<dbReference type="InterPro" id="IPR013749">
    <property type="entry name" value="PM/HMP-P_kinase-1"/>
</dbReference>
<dbReference type="InterPro" id="IPR029056">
    <property type="entry name" value="Ribokinase-like"/>
</dbReference>
<dbReference type="NCBIfam" id="TIGR00097">
    <property type="entry name" value="HMP-P_kinase"/>
    <property type="match status" value="1"/>
</dbReference>
<dbReference type="PANTHER" id="PTHR20858:SF17">
    <property type="entry name" value="HYDROXYMETHYLPYRIMIDINE_PHOSPHOMETHYLPYRIMIDINE KINASE THI20-RELATED"/>
    <property type="match status" value="1"/>
</dbReference>
<dbReference type="PANTHER" id="PTHR20858">
    <property type="entry name" value="PHOSPHOMETHYLPYRIMIDINE KINASE"/>
    <property type="match status" value="1"/>
</dbReference>
<dbReference type="Pfam" id="PF08543">
    <property type="entry name" value="Phos_pyr_kin"/>
    <property type="match status" value="1"/>
</dbReference>
<dbReference type="SUPFAM" id="SSF53613">
    <property type="entry name" value="Ribokinase-like"/>
    <property type="match status" value="1"/>
</dbReference>
<reference key="1">
    <citation type="journal article" date="2001" name="Lancet">
        <title>Whole genome sequencing of meticillin-resistant Staphylococcus aureus.</title>
        <authorList>
            <person name="Kuroda M."/>
            <person name="Ohta T."/>
            <person name="Uchiyama I."/>
            <person name="Baba T."/>
            <person name="Yuzawa H."/>
            <person name="Kobayashi I."/>
            <person name="Cui L."/>
            <person name="Oguchi A."/>
            <person name="Aoki K."/>
            <person name="Nagai Y."/>
            <person name="Lian J.-Q."/>
            <person name="Ito T."/>
            <person name="Kanamori M."/>
            <person name="Matsumaru H."/>
            <person name="Maruyama A."/>
            <person name="Murakami H."/>
            <person name="Hosoyama A."/>
            <person name="Mizutani-Ui Y."/>
            <person name="Takahashi N.K."/>
            <person name="Sawano T."/>
            <person name="Inoue R."/>
            <person name="Kaito C."/>
            <person name="Sekimizu K."/>
            <person name="Hirakawa H."/>
            <person name="Kuhara S."/>
            <person name="Goto S."/>
            <person name="Yabuzaki J."/>
            <person name="Kanehisa M."/>
            <person name="Yamashita A."/>
            <person name="Oshima K."/>
            <person name="Furuya K."/>
            <person name="Yoshino C."/>
            <person name="Shiba T."/>
            <person name="Hattori M."/>
            <person name="Ogasawara N."/>
            <person name="Hayashi H."/>
            <person name="Hiramatsu K."/>
        </authorList>
    </citation>
    <scope>NUCLEOTIDE SEQUENCE [LARGE SCALE GENOMIC DNA]</scope>
    <source>
        <strain>N315</strain>
    </source>
</reference>
<reference key="2">
    <citation type="journal article" date="2005" name="J. Microbiol. Methods">
        <title>Correlation of proteomic and transcriptomic profiles of Staphylococcus aureus during the post-exponential phase of growth.</title>
        <authorList>
            <person name="Scherl A."/>
            <person name="Francois P."/>
            <person name="Bento M."/>
            <person name="Deshusses J.M."/>
            <person name="Charbonnier Y."/>
            <person name="Converset V."/>
            <person name="Huyghe A."/>
            <person name="Walter N."/>
            <person name="Hoogland C."/>
            <person name="Appel R.D."/>
            <person name="Sanchez J.-C."/>
            <person name="Zimmermann-Ivol C.G."/>
            <person name="Corthals G.L."/>
            <person name="Hochstrasser D.F."/>
            <person name="Schrenzel J."/>
        </authorList>
    </citation>
    <scope>IDENTIFICATION BY MASS SPECTROMETRY</scope>
    <source>
        <strain>N315</strain>
    </source>
</reference>
<reference key="3">
    <citation type="submission" date="2007-10" db="UniProtKB">
        <title>Shotgun proteomic analysis of total and membrane protein extracts of S. aureus strain N315.</title>
        <authorList>
            <person name="Vaezzadeh A.R."/>
            <person name="Deshusses J."/>
            <person name="Lescuyer P."/>
            <person name="Hochstrasser D.F."/>
        </authorList>
    </citation>
    <scope>IDENTIFICATION BY MASS SPECTROMETRY [LARGE SCALE ANALYSIS]</scope>
    <source>
        <strain>N315</strain>
    </source>
</reference>
<proteinExistence type="evidence at protein level"/>
<feature type="chain" id="PRO_0000192029" description="Hydroxymethylpyrimidine/phosphomethylpyrimidine kinase">
    <location>
        <begin position="1"/>
        <end position="276"/>
    </location>
</feature>
<feature type="binding site" evidence="1">
    <location>
        <position position="45"/>
    </location>
    <ligand>
        <name>4-amino-5-hydroxymethyl-2-methylpyrimidine</name>
        <dbReference type="ChEBI" id="CHEBI:16892"/>
    </ligand>
</feature>
<comment type="function">
    <text evidence="2">Catalyzes the phosphorylation of hydroxymethylpyrimidine phosphate (HMP-P) to HMP-PP, and of HMP to HMP-P.</text>
</comment>
<comment type="catalytic activity">
    <reaction evidence="2">
        <text>4-amino-5-hydroxymethyl-2-methylpyrimidine + ATP = 4-amino-2-methyl-5-(phosphooxymethyl)pyrimidine + ADP + H(+)</text>
        <dbReference type="Rhea" id="RHEA:23096"/>
        <dbReference type="ChEBI" id="CHEBI:15378"/>
        <dbReference type="ChEBI" id="CHEBI:16892"/>
        <dbReference type="ChEBI" id="CHEBI:30616"/>
        <dbReference type="ChEBI" id="CHEBI:58354"/>
        <dbReference type="ChEBI" id="CHEBI:456216"/>
        <dbReference type="EC" id="2.7.1.49"/>
    </reaction>
</comment>
<comment type="catalytic activity">
    <reaction evidence="2">
        <text>4-amino-2-methyl-5-(phosphooxymethyl)pyrimidine + ATP = 4-amino-2-methyl-5-(diphosphooxymethyl)pyrimidine + ADP</text>
        <dbReference type="Rhea" id="RHEA:19893"/>
        <dbReference type="ChEBI" id="CHEBI:30616"/>
        <dbReference type="ChEBI" id="CHEBI:57841"/>
        <dbReference type="ChEBI" id="CHEBI:58354"/>
        <dbReference type="ChEBI" id="CHEBI:456216"/>
        <dbReference type="EC" id="2.7.4.7"/>
    </reaction>
</comment>
<comment type="pathway">
    <text>Cofactor biosynthesis; thiamine diphosphate biosynthesis; 4-amino-2-methyl-5-diphosphomethylpyrimidine from 5-amino-1-(5-phospho-D-ribosyl)imidazole: step 2/3.</text>
</comment>
<comment type="pathway">
    <text>Cofactor biosynthesis; thiamine diphosphate biosynthesis; 4-amino-2-methyl-5-diphosphomethylpyrimidine from 5-amino-1-(5-phospho-D-ribosyl)imidazole: step 3/3.</text>
</comment>
<comment type="similarity">
    <text evidence="3">Belongs to the ThiD family.</text>
</comment>
<name>THID_STAAN</name>
<accession>P99124</accession>
<accession>Q99SG4</accession>
<organism>
    <name type="scientific">Staphylococcus aureus (strain N315)</name>
    <dbReference type="NCBI Taxonomy" id="158879"/>
    <lineage>
        <taxon>Bacteria</taxon>
        <taxon>Bacillati</taxon>
        <taxon>Bacillota</taxon>
        <taxon>Bacilli</taxon>
        <taxon>Bacillales</taxon>
        <taxon>Staphylococcaceae</taxon>
        <taxon>Staphylococcus</taxon>
    </lineage>
</organism>
<gene>
    <name type="primary">thiD</name>
    <name type="ordered locus">SA1896</name>
</gene>
<keyword id="KW-0067">ATP-binding</keyword>
<keyword id="KW-0418">Kinase</keyword>
<keyword id="KW-0547">Nucleotide-binding</keyword>
<keyword id="KW-0784">Thiamine biosynthesis</keyword>
<keyword id="KW-0808">Transferase</keyword>